<feature type="peptide" id="PRO_0000045072" description="Natriuretic peptide TNPb" evidence="1">
    <location>
        <begin position="1"/>
        <end position="35"/>
    </location>
</feature>
<feature type="disulfide bond" evidence="1">
    <location>
        <begin position="9"/>
        <end position="25"/>
    </location>
</feature>
<protein>
    <recommendedName>
        <fullName evidence="4">Natriuretic peptide TNPb</fullName>
        <shortName evidence="3">TNP-b</shortName>
    </recommendedName>
    <alternativeName>
        <fullName>Taipan natriuretic peptide</fullName>
    </alternativeName>
    <alternativeName>
        <fullName>Venom natriuretic peptide OxsSNPb</fullName>
    </alternativeName>
</protein>
<keyword id="KW-0903">Direct protein sequencing</keyword>
<keyword id="KW-1015">Disulfide bond</keyword>
<keyword id="KW-0382">Hypotensive agent</keyword>
<keyword id="KW-0964">Secreted</keyword>
<keyword id="KW-0800">Toxin</keyword>
<keyword id="KW-0838">Vasoactive</keyword>
<keyword id="KW-0840">Vasodilator</keyword>
<proteinExistence type="evidence at protein level"/>
<sequence length="35" mass="3663">SDPKIGDGCFGLPLDHIGSVSGLGCNRPVQNRPKK</sequence>
<evidence type="ECO:0000269" key="1">
    <source>
    </source>
</evidence>
<evidence type="ECO:0000269" key="2">
    <source>
    </source>
</evidence>
<evidence type="ECO:0000303" key="3">
    <source>
    </source>
</evidence>
<evidence type="ECO:0000303" key="4">
    <source>
    </source>
</evidence>
<evidence type="ECO:0000305" key="5"/>
<evidence type="ECO:0000305" key="6">
    <source>
    </source>
</evidence>
<accession>P83227</accession>
<name>VNPB_OXYMI</name>
<dbReference type="SMR" id="P83227"/>
<dbReference type="GO" id="GO:0005576">
    <property type="term" value="C:extracellular region"/>
    <property type="evidence" value="ECO:0007669"/>
    <property type="project" value="UniProtKB-SubCell"/>
</dbReference>
<dbReference type="GO" id="GO:0005179">
    <property type="term" value="F:hormone activity"/>
    <property type="evidence" value="ECO:0007669"/>
    <property type="project" value="InterPro"/>
</dbReference>
<dbReference type="GO" id="GO:0090729">
    <property type="term" value="F:toxin activity"/>
    <property type="evidence" value="ECO:0007669"/>
    <property type="project" value="UniProtKB-KW"/>
</dbReference>
<dbReference type="GO" id="GO:0008217">
    <property type="term" value="P:regulation of blood pressure"/>
    <property type="evidence" value="ECO:0007669"/>
    <property type="project" value="UniProtKB-KW"/>
</dbReference>
<dbReference type="GO" id="GO:0042311">
    <property type="term" value="P:vasodilation"/>
    <property type="evidence" value="ECO:0007669"/>
    <property type="project" value="UniProtKB-KW"/>
</dbReference>
<dbReference type="InterPro" id="IPR000663">
    <property type="entry name" value="Natr_peptide"/>
</dbReference>
<dbReference type="InterPro" id="IPR030480">
    <property type="entry name" value="Natr_peptide_CS"/>
</dbReference>
<dbReference type="Pfam" id="PF00212">
    <property type="entry name" value="ANP"/>
    <property type="match status" value="1"/>
</dbReference>
<dbReference type="SMART" id="SM00183">
    <property type="entry name" value="NAT_PEP"/>
    <property type="match status" value="1"/>
</dbReference>
<dbReference type="PROSITE" id="PS00263">
    <property type="entry name" value="NATRIURETIC_PEPTIDE"/>
    <property type="match status" value="1"/>
</dbReference>
<comment type="function">
    <text evidence="1 2">Snake venom natriuretic peptide that exhibits vasoactive and probable hypotensive activity (PubMed:15652496). Is only weakly active on natriuretic peptide receptor-C (NPR3) (PubMed:15652496). Stimulates cGMP production through the natriuretic peptide receptor 1 (NPR1) with moderate potencies for the rat NPR1 (EC(50)=1200 nM), and very weak potencies over human NPR1 (30% activation at 10 uM) (PubMed:37049825). In vivo, does not impact systolic and diastolic blood pressure, as well as heart rate, when intravenously injected in conscious rabbits (PubMed:37049825). Does not affect the bradycardia due to cardiac afferent stimulation (Bezold-Jarisch reflex) (PubMed:37049825).</text>
</comment>
<comment type="subcellular location">
    <subcellularLocation>
        <location evidence="1">Secreted</location>
    </subcellularLocation>
</comment>
<comment type="tissue specificity">
    <text evidence="6">Expressed by the venom gland.</text>
</comment>
<comment type="mass spectrometry" mass="3661.0" method="Electrospray" evidence="1"/>
<comment type="similarity">
    <text evidence="5">Belongs to the natriuretic peptide family.</text>
</comment>
<organism>
    <name type="scientific">Oxyuranus microlepidotus</name>
    <name type="common">Inland taipan</name>
    <name type="synonym">Diemenia microlepidota</name>
    <dbReference type="NCBI Taxonomy" id="111177"/>
    <lineage>
        <taxon>Eukaryota</taxon>
        <taxon>Metazoa</taxon>
        <taxon>Chordata</taxon>
        <taxon>Craniata</taxon>
        <taxon>Vertebrata</taxon>
        <taxon>Euteleostomi</taxon>
        <taxon>Lepidosauria</taxon>
        <taxon>Squamata</taxon>
        <taxon>Bifurcata</taxon>
        <taxon>Unidentata</taxon>
        <taxon>Episquamata</taxon>
        <taxon>Toxicofera</taxon>
        <taxon>Serpentes</taxon>
        <taxon>Colubroidea</taxon>
        <taxon>Elapidae</taxon>
        <taxon>Hydrophiinae</taxon>
        <taxon>Oxyuranus</taxon>
    </lineage>
</organism>
<reference key="1">
    <citation type="journal article" date="2005" name="Biochem. Biophys. Res. Commun.">
        <title>Novel natriuretic peptides from the venom of the inland taipan (Oxyuranus microlepidotus): isolation, chemical and biological characterisation.</title>
        <authorList>
            <person name="Fry B.G."/>
            <person name="Wickramaratana J.C."/>
            <person name="Lemme S."/>
            <person name="Beuve A."/>
            <person name="Garbers D."/>
            <person name="Hodgson W.C."/>
            <person name="Alewood P.F."/>
        </authorList>
    </citation>
    <scope>PROTEIN SEQUENCE</scope>
    <scope>FUNCTION</scope>
    <scope>SUBCELLULAR LOCATION</scope>
    <scope>MASS SPECTROMETRY</scope>
    <scope>DISULFIDE BOND</scope>
    <source>
        <tissue>Venom</tissue>
    </source>
</reference>
<reference key="2">
    <citation type="journal article" date="2023" name="Molecules">
        <title>Taipan natriuretic peptides are potent and selective agonists for the natriuretic peptide receptor A.</title>
        <authorList>
            <person name="Vink S."/>
            <person name="Akondi K.B."/>
            <person name="Jin J."/>
            <person name="Poth K."/>
            <person name="Torres A.M."/>
            <person name="Kuchel P.W."/>
            <person name="Burke S.L."/>
            <person name="Head G.A."/>
            <person name="Alewood P.F."/>
        </authorList>
    </citation>
    <scope>FUNCTION</scope>
    <scope>SYNTHESIS</scope>
    <scope>BIOASSAY</scope>
</reference>